<comment type="function">
    <text evidence="1">An aminoacyl-tRNA editing enzyme that deacylates mischarged D-aminoacyl-tRNAs. Also deacylates mischarged glycyl-tRNA(Ala), protecting cells against glycine mischarging by AlaRS. Acts via tRNA-based rather than protein-based catalysis; rejects L-amino acids rather than detecting D-amino acids in the active site. By recycling D-aminoacyl-tRNA to D-amino acids and free tRNA molecules, this enzyme counteracts the toxicity associated with the formation of D-aminoacyl-tRNA entities in vivo and helps enforce protein L-homochirality.</text>
</comment>
<comment type="catalytic activity">
    <reaction evidence="1">
        <text>glycyl-tRNA(Ala) + H2O = tRNA(Ala) + glycine + H(+)</text>
        <dbReference type="Rhea" id="RHEA:53744"/>
        <dbReference type="Rhea" id="RHEA-COMP:9657"/>
        <dbReference type="Rhea" id="RHEA-COMP:13640"/>
        <dbReference type="ChEBI" id="CHEBI:15377"/>
        <dbReference type="ChEBI" id="CHEBI:15378"/>
        <dbReference type="ChEBI" id="CHEBI:57305"/>
        <dbReference type="ChEBI" id="CHEBI:78442"/>
        <dbReference type="ChEBI" id="CHEBI:78522"/>
        <dbReference type="EC" id="3.1.1.96"/>
    </reaction>
</comment>
<comment type="catalytic activity">
    <reaction evidence="1">
        <text>a D-aminoacyl-tRNA + H2O = a tRNA + a D-alpha-amino acid + H(+)</text>
        <dbReference type="Rhea" id="RHEA:13953"/>
        <dbReference type="Rhea" id="RHEA-COMP:10123"/>
        <dbReference type="Rhea" id="RHEA-COMP:10124"/>
        <dbReference type="ChEBI" id="CHEBI:15377"/>
        <dbReference type="ChEBI" id="CHEBI:15378"/>
        <dbReference type="ChEBI" id="CHEBI:59871"/>
        <dbReference type="ChEBI" id="CHEBI:78442"/>
        <dbReference type="ChEBI" id="CHEBI:79333"/>
        <dbReference type="EC" id="3.1.1.96"/>
    </reaction>
</comment>
<comment type="subunit">
    <text evidence="1">Homodimer.</text>
</comment>
<comment type="subcellular location">
    <subcellularLocation>
        <location evidence="1">Cytoplasm</location>
    </subcellularLocation>
</comment>
<comment type="domain">
    <text evidence="1">A Gly-cisPro motif from one monomer fits into the active site of the other monomer to allow specific chiral rejection of L-amino acids.</text>
</comment>
<comment type="similarity">
    <text evidence="1">Belongs to the DTD family.</text>
</comment>
<proteinExistence type="inferred from homology"/>
<protein>
    <recommendedName>
        <fullName evidence="1">D-aminoacyl-tRNA deacylase</fullName>
        <shortName evidence="1">DTD</shortName>
        <ecNumber evidence="1">3.1.1.96</ecNumber>
    </recommendedName>
    <alternativeName>
        <fullName evidence="1">Gly-tRNA(Ala) deacylase</fullName>
    </alternativeName>
</protein>
<sequence>MIALIQRVTRAQVDVDGKTAGKIGKGLLVLLGVEKEDNQARANKLAEKVLNYRVFGDENDKMNLNVRQAQGELLVVSQFTLVADTGRGLRPSFSNGATPALADELYRYFIRKCREKIQVETGEFAANMQVSLTNDGPVTFWLQS</sequence>
<name>DTD_ACTSZ</name>
<accession>A6VL72</accession>
<reference key="1">
    <citation type="journal article" date="2010" name="BMC Genomics">
        <title>A genomic perspective on the potential of Actinobacillus succinogenes for industrial succinate production.</title>
        <authorList>
            <person name="McKinlay J.B."/>
            <person name="Laivenieks M."/>
            <person name="Schindler B.D."/>
            <person name="McKinlay A.A."/>
            <person name="Siddaramappa S."/>
            <person name="Challacombe J.F."/>
            <person name="Lowry S.R."/>
            <person name="Clum A."/>
            <person name="Lapidus A.L."/>
            <person name="Burkhart K.B."/>
            <person name="Harkins V."/>
            <person name="Vieille C."/>
        </authorList>
    </citation>
    <scope>NUCLEOTIDE SEQUENCE [LARGE SCALE GENOMIC DNA]</scope>
    <source>
        <strain>ATCC 55618 / DSM 22257 / CCUG 43843 / 130Z</strain>
    </source>
</reference>
<organism>
    <name type="scientific">Actinobacillus succinogenes (strain ATCC 55618 / DSM 22257 / CCUG 43843 / 130Z)</name>
    <dbReference type="NCBI Taxonomy" id="339671"/>
    <lineage>
        <taxon>Bacteria</taxon>
        <taxon>Pseudomonadati</taxon>
        <taxon>Pseudomonadota</taxon>
        <taxon>Gammaproteobacteria</taxon>
        <taxon>Pasteurellales</taxon>
        <taxon>Pasteurellaceae</taxon>
        <taxon>Actinobacillus</taxon>
    </lineage>
</organism>
<keyword id="KW-0963">Cytoplasm</keyword>
<keyword id="KW-0378">Hydrolase</keyword>
<keyword id="KW-1185">Reference proteome</keyword>
<keyword id="KW-0694">RNA-binding</keyword>
<keyword id="KW-0820">tRNA-binding</keyword>
<dbReference type="EC" id="3.1.1.96" evidence="1"/>
<dbReference type="EMBL" id="CP000746">
    <property type="protein sequence ID" value="ABR73719.1"/>
    <property type="molecule type" value="Genomic_DNA"/>
</dbReference>
<dbReference type="RefSeq" id="WP_011978994.1">
    <property type="nucleotide sequence ID" value="NC_009655.1"/>
</dbReference>
<dbReference type="SMR" id="A6VL72"/>
<dbReference type="STRING" id="339671.Asuc_0341"/>
<dbReference type="KEGG" id="asu:Asuc_0341"/>
<dbReference type="eggNOG" id="COG1490">
    <property type="taxonomic scope" value="Bacteria"/>
</dbReference>
<dbReference type="HOGENOM" id="CLU_076901_1_1_6"/>
<dbReference type="OrthoDB" id="9801395at2"/>
<dbReference type="Proteomes" id="UP000001114">
    <property type="component" value="Chromosome"/>
</dbReference>
<dbReference type="GO" id="GO:0005737">
    <property type="term" value="C:cytoplasm"/>
    <property type="evidence" value="ECO:0007669"/>
    <property type="project" value="UniProtKB-SubCell"/>
</dbReference>
<dbReference type="GO" id="GO:0051500">
    <property type="term" value="F:D-tyrosyl-tRNA(Tyr) deacylase activity"/>
    <property type="evidence" value="ECO:0007669"/>
    <property type="project" value="TreeGrafter"/>
</dbReference>
<dbReference type="GO" id="GO:0106026">
    <property type="term" value="F:Gly-tRNA(Ala) deacylase activity"/>
    <property type="evidence" value="ECO:0007669"/>
    <property type="project" value="UniProtKB-UniRule"/>
</dbReference>
<dbReference type="GO" id="GO:0043908">
    <property type="term" value="F:Ser(Gly)-tRNA(Ala) hydrolase activity"/>
    <property type="evidence" value="ECO:0007669"/>
    <property type="project" value="UniProtKB-UniRule"/>
</dbReference>
<dbReference type="GO" id="GO:0000049">
    <property type="term" value="F:tRNA binding"/>
    <property type="evidence" value="ECO:0007669"/>
    <property type="project" value="UniProtKB-UniRule"/>
</dbReference>
<dbReference type="GO" id="GO:0019478">
    <property type="term" value="P:D-amino acid catabolic process"/>
    <property type="evidence" value="ECO:0007669"/>
    <property type="project" value="UniProtKB-UniRule"/>
</dbReference>
<dbReference type="CDD" id="cd00563">
    <property type="entry name" value="Dtyr_deacylase"/>
    <property type="match status" value="1"/>
</dbReference>
<dbReference type="FunFam" id="3.50.80.10:FF:000001">
    <property type="entry name" value="D-aminoacyl-tRNA deacylase"/>
    <property type="match status" value="1"/>
</dbReference>
<dbReference type="Gene3D" id="3.50.80.10">
    <property type="entry name" value="D-tyrosyl-tRNA(Tyr) deacylase"/>
    <property type="match status" value="1"/>
</dbReference>
<dbReference type="HAMAP" id="MF_00518">
    <property type="entry name" value="Deacylase_Dtd"/>
    <property type="match status" value="1"/>
</dbReference>
<dbReference type="InterPro" id="IPR003732">
    <property type="entry name" value="Daa-tRNA_deacyls_DTD"/>
</dbReference>
<dbReference type="InterPro" id="IPR023509">
    <property type="entry name" value="DTD-like_sf"/>
</dbReference>
<dbReference type="NCBIfam" id="TIGR00256">
    <property type="entry name" value="D-aminoacyl-tRNA deacylase"/>
    <property type="match status" value="1"/>
</dbReference>
<dbReference type="PANTHER" id="PTHR10472:SF5">
    <property type="entry name" value="D-AMINOACYL-TRNA DEACYLASE 1"/>
    <property type="match status" value="1"/>
</dbReference>
<dbReference type="PANTHER" id="PTHR10472">
    <property type="entry name" value="D-TYROSYL-TRNA TYR DEACYLASE"/>
    <property type="match status" value="1"/>
</dbReference>
<dbReference type="Pfam" id="PF02580">
    <property type="entry name" value="Tyr_Deacylase"/>
    <property type="match status" value="1"/>
</dbReference>
<dbReference type="SUPFAM" id="SSF69500">
    <property type="entry name" value="DTD-like"/>
    <property type="match status" value="1"/>
</dbReference>
<evidence type="ECO:0000255" key="1">
    <source>
        <dbReference type="HAMAP-Rule" id="MF_00518"/>
    </source>
</evidence>
<gene>
    <name evidence="1" type="primary">dtd</name>
    <name type="ordered locus">Asuc_0341</name>
</gene>
<feature type="chain" id="PRO_1000072483" description="D-aminoacyl-tRNA deacylase">
    <location>
        <begin position="1"/>
        <end position="144"/>
    </location>
</feature>
<feature type="short sequence motif" description="Gly-cisPro motif, important for rejection of L-amino acids" evidence="1">
    <location>
        <begin position="136"/>
        <end position="137"/>
    </location>
</feature>